<protein>
    <recommendedName>
        <fullName evidence="1">S-adenosylmethionine:tRNA ribosyltransferase-isomerase</fullName>
        <ecNumber evidence="1">2.4.99.17</ecNumber>
    </recommendedName>
    <alternativeName>
        <fullName evidence="1">Queuosine biosynthesis protein QueA</fullName>
    </alternativeName>
</protein>
<reference key="1">
    <citation type="journal article" date="2006" name="Genome Biol.">
        <title>Genomic analysis reveals that Pseudomonas aeruginosa virulence is combinatorial.</title>
        <authorList>
            <person name="Lee D.G."/>
            <person name="Urbach J.M."/>
            <person name="Wu G."/>
            <person name="Liberati N.T."/>
            <person name="Feinbaum R.L."/>
            <person name="Miyata S."/>
            <person name="Diggins L.T."/>
            <person name="He J."/>
            <person name="Saucier M."/>
            <person name="Deziel E."/>
            <person name="Friedman L."/>
            <person name="Li L."/>
            <person name="Grills G."/>
            <person name="Montgomery K."/>
            <person name="Kucherlapati R."/>
            <person name="Rahme L.G."/>
            <person name="Ausubel F.M."/>
        </authorList>
    </citation>
    <scope>NUCLEOTIDE SEQUENCE [LARGE SCALE GENOMIC DNA]</scope>
    <source>
        <strain>UCBPP-PA14</strain>
    </source>
</reference>
<proteinExistence type="inferred from homology"/>
<accession>Q02RX8</accession>
<keyword id="KW-0963">Cytoplasm</keyword>
<keyword id="KW-0671">Queuosine biosynthesis</keyword>
<keyword id="KW-0949">S-adenosyl-L-methionine</keyword>
<keyword id="KW-0808">Transferase</keyword>
<gene>
    <name evidence="1" type="primary">queA</name>
    <name type="ordered locus">PA14_14590</name>
</gene>
<evidence type="ECO:0000255" key="1">
    <source>
        <dbReference type="HAMAP-Rule" id="MF_00113"/>
    </source>
</evidence>
<organism>
    <name type="scientific">Pseudomonas aeruginosa (strain UCBPP-PA14)</name>
    <dbReference type="NCBI Taxonomy" id="208963"/>
    <lineage>
        <taxon>Bacteria</taxon>
        <taxon>Pseudomonadati</taxon>
        <taxon>Pseudomonadota</taxon>
        <taxon>Gammaproteobacteria</taxon>
        <taxon>Pseudomonadales</taxon>
        <taxon>Pseudomonadaceae</taxon>
        <taxon>Pseudomonas</taxon>
    </lineage>
</organism>
<sequence length="347" mass="38133">MRVADFHFDLPEALIARHPLPERRASRLLALDGPTGTLAHRQFADLLDYLRPGDLMVFNNTRVIPARLFGQKESGGKLEVLVERVLDQHRVLAHIRASKAPKPGTRILVEGGGSAEMLQRHDALFELAFAEPVLPLLERVGHMPLPPYIDRPDDAADRERYQTVYAQRAGAVAAPTAGLHFDEALLEAIRAKGVDTAFVTLHVGAGTFQPVRVERIEDHVMHREWLEVGQDVVDAVSACRARGGRVVAVGTTSVRSLESAARDGELKPFSGDTDIFIYPGRPFHVVDALVTNFHLPESTLLMLVSAFAGYPETMAAYAAAVAQGYRFFSYGDAMFITRNPAPRGPED</sequence>
<name>QUEA_PSEAB</name>
<dbReference type="EC" id="2.4.99.17" evidence="1"/>
<dbReference type="EMBL" id="CP000438">
    <property type="protein sequence ID" value="ABJ13085.1"/>
    <property type="molecule type" value="Genomic_DNA"/>
</dbReference>
<dbReference type="RefSeq" id="WP_003137849.1">
    <property type="nucleotide sequence ID" value="NZ_CP034244.1"/>
</dbReference>
<dbReference type="SMR" id="Q02RX8"/>
<dbReference type="KEGG" id="pau:PA14_14590"/>
<dbReference type="PseudoCAP" id="PA14_14590"/>
<dbReference type="HOGENOM" id="CLU_039110_1_0_6"/>
<dbReference type="BioCyc" id="PAER208963:G1G74-1198-MONOMER"/>
<dbReference type="UniPathway" id="UPA00392"/>
<dbReference type="Proteomes" id="UP000000653">
    <property type="component" value="Chromosome"/>
</dbReference>
<dbReference type="GO" id="GO:0005737">
    <property type="term" value="C:cytoplasm"/>
    <property type="evidence" value="ECO:0007669"/>
    <property type="project" value="UniProtKB-SubCell"/>
</dbReference>
<dbReference type="GO" id="GO:0051075">
    <property type="term" value="F:S-adenosylmethionine:tRNA ribosyltransferase-isomerase activity"/>
    <property type="evidence" value="ECO:0007669"/>
    <property type="project" value="UniProtKB-EC"/>
</dbReference>
<dbReference type="GO" id="GO:0008616">
    <property type="term" value="P:queuosine biosynthetic process"/>
    <property type="evidence" value="ECO:0007669"/>
    <property type="project" value="UniProtKB-UniRule"/>
</dbReference>
<dbReference type="GO" id="GO:0002099">
    <property type="term" value="P:tRNA wobble guanine modification"/>
    <property type="evidence" value="ECO:0007669"/>
    <property type="project" value="TreeGrafter"/>
</dbReference>
<dbReference type="FunFam" id="2.40.10.240:FF:000001">
    <property type="entry name" value="S-adenosylmethionine:tRNA ribosyltransferase-isomerase"/>
    <property type="match status" value="1"/>
</dbReference>
<dbReference type="FunFam" id="3.40.1780.10:FF:000001">
    <property type="entry name" value="S-adenosylmethionine:tRNA ribosyltransferase-isomerase"/>
    <property type="match status" value="1"/>
</dbReference>
<dbReference type="Gene3D" id="2.40.10.240">
    <property type="entry name" value="QueA-like"/>
    <property type="match status" value="1"/>
</dbReference>
<dbReference type="Gene3D" id="3.40.1780.10">
    <property type="entry name" value="QueA-like"/>
    <property type="match status" value="1"/>
</dbReference>
<dbReference type="HAMAP" id="MF_00113">
    <property type="entry name" value="QueA"/>
    <property type="match status" value="1"/>
</dbReference>
<dbReference type="InterPro" id="IPR003699">
    <property type="entry name" value="QueA"/>
</dbReference>
<dbReference type="InterPro" id="IPR042118">
    <property type="entry name" value="QueA_dom1"/>
</dbReference>
<dbReference type="InterPro" id="IPR042119">
    <property type="entry name" value="QueA_dom2"/>
</dbReference>
<dbReference type="InterPro" id="IPR036100">
    <property type="entry name" value="QueA_sf"/>
</dbReference>
<dbReference type="NCBIfam" id="NF001140">
    <property type="entry name" value="PRK00147.1"/>
    <property type="match status" value="1"/>
</dbReference>
<dbReference type="NCBIfam" id="TIGR00113">
    <property type="entry name" value="queA"/>
    <property type="match status" value="1"/>
</dbReference>
<dbReference type="PANTHER" id="PTHR30307">
    <property type="entry name" value="S-ADENOSYLMETHIONINE:TRNA RIBOSYLTRANSFERASE-ISOMERASE"/>
    <property type="match status" value="1"/>
</dbReference>
<dbReference type="PANTHER" id="PTHR30307:SF0">
    <property type="entry name" value="S-ADENOSYLMETHIONINE:TRNA RIBOSYLTRANSFERASE-ISOMERASE"/>
    <property type="match status" value="1"/>
</dbReference>
<dbReference type="Pfam" id="PF02547">
    <property type="entry name" value="Queuosine_synth"/>
    <property type="match status" value="1"/>
</dbReference>
<dbReference type="SUPFAM" id="SSF111337">
    <property type="entry name" value="QueA-like"/>
    <property type="match status" value="1"/>
</dbReference>
<feature type="chain" id="PRO_1000015248" description="S-adenosylmethionine:tRNA ribosyltransferase-isomerase">
    <location>
        <begin position="1"/>
        <end position="347"/>
    </location>
</feature>
<comment type="function">
    <text evidence="1">Transfers and isomerizes the ribose moiety from AdoMet to the 7-aminomethyl group of 7-deazaguanine (preQ1-tRNA) to give epoxyqueuosine (oQ-tRNA).</text>
</comment>
<comment type="catalytic activity">
    <reaction evidence="1">
        <text>7-aminomethyl-7-carbaguanosine(34) in tRNA + S-adenosyl-L-methionine = epoxyqueuosine(34) in tRNA + adenine + L-methionine + 2 H(+)</text>
        <dbReference type="Rhea" id="RHEA:32155"/>
        <dbReference type="Rhea" id="RHEA-COMP:10342"/>
        <dbReference type="Rhea" id="RHEA-COMP:18582"/>
        <dbReference type="ChEBI" id="CHEBI:15378"/>
        <dbReference type="ChEBI" id="CHEBI:16708"/>
        <dbReference type="ChEBI" id="CHEBI:57844"/>
        <dbReference type="ChEBI" id="CHEBI:59789"/>
        <dbReference type="ChEBI" id="CHEBI:82833"/>
        <dbReference type="ChEBI" id="CHEBI:194443"/>
        <dbReference type="EC" id="2.4.99.17"/>
    </reaction>
</comment>
<comment type="pathway">
    <text evidence="1">tRNA modification; tRNA-queuosine biosynthesis.</text>
</comment>
<comment type="subunit">
    <text evidence="1">Monomer.</text>
</comment>
<comment type="subcellular location">
    <subcellularLocation>
        <location evidence="1">Cytoplasm</location>
    </subcellularLocation>
</comment>
<comment type="similarity">
    <text evidence="1">Belongs to the QueA family.</text>
</comment>